<protein>
    <recommendedName>
        <fullName evidence="1">Probable potassium transport system protein Kup</fullName>
    </recommendedName>
</protein>
<keyword id="KW-0997">Cell inner membrane</keyword>
<keyword id="KW-1003">Cell membrane</keyword>
<keyword id="KW-0406">Ion transport</keyword>
<keyword id="KW-0472">Membrane</keyword>
<keyword id="KW-0630">Potassium</keyword>
<keyword id="KW-0633">Potassium transport</keyword>
<keyword id="KW-0769">Symport</keyword>
<keyword id="KW-0812">Transmembrane</keyword>
<keyword id="KW-1133">Transmembrane helix</keyword>
<keyword id="KW-0813">Transport</keyword>
<name>KUP_PSE14</name>
<evidence type="ECO:0000255" key="1">
    <source>
        <dbReference type="HAMAP-Rule" id="MF_01522"/>
    </source>
</evidence>
<reference key="1">
    <citation type="journal article" date="2005" name="J. Bacteriol.">
        <title>Whole-genome sequence analysis of Pseudomonas syringae pv. phaseolicola 1448A reveals divergence among pathovars in genes involved in virulence and transposition.</title>
        <authorList>
            <person name="Joardar V."/>
            <person name="Lindeberg M."/>
            <person name="Jackson R.W."/>
            <person name="Selengut J."/>
            <person name="Dodson R."/>
            <person name="Brinkac L.M."/>
            <person name="Daugherty S.C."/>
            <person name="DeBoy R.T."/>
            <person name="Durkin A.S."/>
            <person name="Gwinn Giglio M."/>
            <person name="Madupu R."/>
            <person name="Nelson W.C."/>
            <person name="Rosovitz M.J."/>
            <person name="Sullivan S.A."/>
            <person name="Crabtree J."/>
            <person name="Creasy T."/>
            <person name="Davidsen T.M."/>
            <person name="Haft D.H."/>
            <person name="Zafar N."/>
            <person name="Zhou L."/>
            <person name="Halpin R."/>
            <person name="Holley T."/>
            <person name="Khouri H.M."/>
            <person name="Feldblyum T.V."/>
            <person name="White O."/>
            <person name="Fraser C.M."/>
            <person name="Chatterjee A.K."/>
            <person name="Cartinhour S."/>
            <person name="Schneider D."/>
            <person name="Mansfield J.W."/>
            <person name="Collmer A."/>
            <person name="Buell R."/>
        </authorList>
    </citation>
    <scope>NUCLEOTIDE SEQUENCE [LARGE SCALE GENOMIC DNA]</scope>
    <source>
        <strain>1448A / Race 6</strain>
    </source>
</reference>
<comment type="function">
    <text evidence="1">Transport of potassium into the cell. Likely operates as a K(+):H(+) symporter.</text>
</comment>
<comment type="catalytic activity">
    <reaction evidence="1">
        <text>K(+)(in) + H(+)(in) = K(+)(out) + H(+)(out)</text>
        <dbReference type="Rhea" id="RHEA:28490"/>
        <dbReference type="ChEBI" id="CHEBI:15378"/>
        <dbReference type="ChEBI" id="CHEBI:29103"/>
    </reaction>
    <physiologicalReaction direction="right-to-left" evidence="1">
        <dbReference type="Rhea" id="RHEA:28492"/>
    </physiologicalReaction>
</comment>
<comment type="subcellular location">
    <subcellularLocation>
        <location evidence="1">Cell inner membrane</location>
        <topology evidence="1">Multi-pass membrane protein</topology>
    </subcellularLocation>
</comment>
<comment type="similarity">
    <text evidence="1">Belongs to the HAK/KUP transporter (TC 2.A.72) family.</text>
</comment>
<accession>Q48FA9</accession>
<feature type="chain" id="PRO_0000279812" description="Probable potassium transport system protein Kup">
    <location>
        <begin position="1"/>
        <end position="631"/>
    </location>
</feature>
<feature type="transmembrane region" description="Helical" evidence="1">
    <location>
        <begin position="17"/>
        <end position="37"/>
    </location>
</feature>
<feature type="transmembrane region" description="Helical" evidence="1">
    <location>
        <begin position="56"/>
        <end position="76"/>
    </location>
</feature>
<feature type="transmembrane region" description="Helical" evidence="1">
    <location>
        <begin position="109"/>
        <end position="129"/>
    </location>
</feature>
<feature type="transmembrane region" description="Helical" evidence="1">
    <location>
        <begin position="147"/>
        <end position="167"/>
    </location>
</feature>
<feature type="transmembrane region" description="Helical" evidence="1">
    <location>
        <begin position="174"/>
        <end position="194"/>
    </location>
</feature>
<feature type="transmembrane region" description="Helical" evidence="1">
    <location>
        <begin position="215"/>
        <end position="235"/>
    </location>
</feature>
<feature type="transmembrane region" description="Helical" evidence="1">
    <location>
        <begin position="256"/>
        <end position="276"/>
    </location>
</feature>
<feature type="transmembrane region" description="Helical" evidence="1">
    <location>
        <begin position="288"/>
        <end position="308"/>
    </location>
</feature>
<feature type="transmembrane region" description="Helical" evidence="1">
    <location>
        <begin position="346"/>
        <end position="366"/>
    </location>
</feature>
<feature type="transmembrane region" description="Helical" evidence="1">
    <location>
        <begin position="378"/>
        <end position="398"/>
    </location>
</feature>
<feature type="transmembrane region" description="Helical" evidence="1">
    <location>
        <begin position="403"/>
        <end position="423"/>
    </location>
</feature>
<feature type="transmembrane region" description="Helical" evidence="1">
    <location>
        <begin position="428"/>
        <end position="448"/>
    </location>
</feature>
<proteinExistence type="inferred from homology"/>
<dbReference type="EMBL" id="CP000058">
    <property type="protein sequence ID" value="AAZ36049.1"/>
    <property type="molecule type" value="Genomic_DNA"/>
</dbReference>
<dbReference type="RefSeq" id="WP_004666011.1">
    <property type="nucleotide sequence ID" value="NC_005773.3"/>
</dbReference>
<dbReference type="KEGG" id="psp:PSPPH_3790"/>
<dbReference type="eggNOG" id="COG3158">
    <property type="taxonomic scope" value="Bacteria"/>
</dbReference>
<dbReference type="HOGENOM" id="CLU_008142_4_2_6"/>
<dbReference type="Proteomes" id="UP000000551">
    <property type="component" value="Chromosome"/>
</dbReference>
<dbReference type="GO" id="GO:0005886">
    <property type="term" value="C:plasma membrane"/>
    <property type="evidence" value="ECO:0007669"/>
    <property type="project" value="UniProtKB-SubCell"/>
</dbReference>
<dbReference type="GO" id="GO:0015079">
    <property type="term" value="F:potassium ion transmembrane transporter activity"/>
    <property type="evidence" value="ECO:0007669"/>
    <property type="project" value="UniProtKB-UniRule"/>
</dbReference>
<dbReference type="GO" id="GO:0015293">
    <property type="term" value="F:symporter activity"/>
    <property type="evidence" value="ECO:0007669"/>
    <property type="project" value="UniProtKB-UniRule"/>
</dbReference>
<dbReference type="HAMAP" id="MF_01522">
    <property type="entry name" value="Kup"/>
    <property type="match status" value="1"/>
</dbReference>
<dbReference type="InterPro" id="IPR003855">
    <property type="entry name" value="K+_transporter"/>
</dbReference>
<dbReference type="InterPro" id="IPR053952">
    <property type="entry name" value="K_trans_C"/>
</dbReference>
<dbReference type="InterPro" id="IPR053951">
    <property type="entry name" value="K_trans_N"/>
</dbReference>
<dbReference type="InterPro" id="IPR023051">
    <property type="entry name" value="Kup"/>
</dbReference>
<dbReference type="PANTHER" id="PTHR30540:SF79">
    <property type="entry name" value="LOW AFFINITY POTASSIUM TRANSPORT SYSTEM PROTEIN KUP"/>
    <property type="match status" value="1"/>
</dbReference>
<dbReference type="PANTHER" id="PTHR30540">
    <property type="entry name" value="OSMOTIC STRESS POTASSIUM TRANSPORTER"/>
    <property type="match status" value="1"/>
</dbReference>
<dbReference type="Pfam" id="PF02705">
    <property type="entry name" value="K_trans"/>
    <property type="match status" value="1"/>
</dbReference>
<dbReference type="Pfam" id="PF22776">
    <property type="entry name" value="K_trans_C"/>
    <property type="match status" value="1"/>
</dbReference>
<gene>
    <name evidence="1" type="primary">kup</name>
    <name type="ordered locus">PSPPH_3790</name>
</gene>
<organism>
    <name type="scientific">Pseudomonas savastanoi pv. phaseolicola (strain 1448A / Race 6)</name>
    <name type="common">Pseudomonas syringae pv. phaseolicola (strain 1448A / Race 6)</name>
    <dbReference type="NCBI Taxonomy" id="264730"/>
    <lineage>
        <taxon>Bacteria</taxon>
        <taxon>Pseudomonadati</taxon>
        <taxon>Pseudomonadota</taxon>
        <taxon>Gammaproteobacteria</taxon>
        <taxon>Pseudomonadales</taxon>
        <taxon>Pseudomonadaceae</taxon>
        <taxon>Pseudomonas</taxon>
    </lineage>
</organism>
<sequence length="631" mass="68361">MSQTNSHGEAAGTAKPIGLLIAAVGVVYGDIGTSPLYTLKEVFQGGYGVEVTHDAILGVLSLIFWSLIWVVSFKYMAFVLRADNQGEGGIMALMALARRASAKHPKLQMMMVVFGLFGAALFYGDSMITPAVSVLSAMEGLELAFDGLDHWIVPMALIVLVGLFLIQRHGTARIGVLFGPVMVTWFLVLGALGVYGIMQSPEVLKAVNPAWGVNFFIIHPGIGVAILGAVVLALTGAEALYADMGHFGRKPISRAWFILVLPALLLNYFGQGALVLGNPETVRNPFYLLAPGWALLPLIGLSTMATIIASQAVISGAFSMTLQAIQLGYIPRMHIQHTSSDAQGQIYIGAVNWALMAGVILLVIGFESSGALASAYGVAVTGTMLCTTILVSTVMLMLWKWPPLLAVPLLICLLLVDGLFFAANVPKIFQGGAFPVLAGAVLFILMTTWKRGKQLLAERIDEGGLPLPIFISSIRVQPPHRVQGTAVFLTARSDAVPHALLHNMLHNQVLHEQVVLLTVVYEDSPRVPAAQRVEVESYGEGFYRVILHFGFIDEPDVPAALALCDLPELDFSPMRTTYFLSRETVIPSKMDGMARWREALFAFMLKNANGNLRFFKLPFNRVIELGTQVEM</sequence>